<comment type="catalytic activity">
    <reaction>
        <text>Hydrolysis of terminal, non-reducing alpha-D-galactose residues in alpha-D-galactosides, including galactose oligosaccharides, galactomannans and galactolipids.</text>
        <dbReference type="EC" id="3.2.1.22"/>
    </reaction>
</comment>
<comment type="subunit">
    <text evidence="1">Homotetramer.</text>
</comment>
<comment type="subcellular location">
    <subcellularLocation>
        <location evidence="1">Secreted</location>
    </subcellularLocation>
</comment>
<comment type="similarity">
    <text evidence="3">Belongs to the glycosyl hydrolase 27 family.</text>
</comment>
<keyword id="KW-1015">Disulfide bond</keyword>
<keyword id="KW-0325">Glycoprotein</keyword>
<keyword id="KW-0326">Glycosidase</keyword>
<keyword id="KW-0378">Hydrolase</keyword>
<keyword id="KW-0964">Secreted</keyword>
<keyword id="KW-0732">Signal</keyword>
<proteinExistence type="inferred from homology"/>
<dbReference type="EC" id="3.2.1.22"/>
<dbReference type="EMBL" id="Z37508">
    <property type="protein sequence ID" value="CAA85737.1"/>
    <property type="molecule type" value="Genomic_DNA"/>
</dbReference>
<dbReference type="PIR" id="S50310">
    <property type="entry name" value="S50310"/>
</dbReference>
<dbReference type="SMR" id="P41945"/>
<dbReference type="CAZy" id="GH27">
    <property type="family name" value="Glycoside Hydrolase Family 27"/>
</dbReference>
<dbReference type="GlyCosmos" id="P41945">
    <property type="glycosylation" value="9 sites, No reported glycans"/>
</dbReference>
<dbReference type="SGD" id="S000029663">
    <property type="gene designation" value="MEL2"/>
</dbReference>
<dbReference type="GO" id="GO:0005576">
    <property type="term" value="C:extracellular region"/>
    <property type="evidence" value="ECO:0007669"/>
    <property type="project" value="UniProtKB-SubCell"/>
</dbReference>
<dbReference type="GO" id="GO:0004557">
    <property type="term" value="F:alpha-galactosidase activity"/>
    <property type="evidence" value="ECO:0000250"/>
    <property type="project" value="SGD"/>
</dbReference>
<dbReference type="GO" id="GO:0005995">
    <property type="term" value="P:melibiose catabolic process"/>
    <property type="evidence" value="ECO:0000315"/>
    <property type="project" value="SGD"/>
</dbReference>
<dbReference type="CDD" id="cd14792">
    <property type="entry name" value="GH27"/>
    <property type="match status" value="1"/>
</dbReference>
<dbReference type="FunFam" id="3.20.20.70:FF:000202">
    <property type="entry name" value="Alpha-galactosidase"/>
    <property type="match status" value="1"/>
</dbReference>
<dbReference type="Gene3D" id="3.20.20.70">
    <property type="entry name" value="Aldolase class I"/>
    <property type="match status" value="1"/>
</dbReference>
<dbReference type="Gene3D" id="2.60.40.1180">
    <property type="entry name" value="Golgi alpha-mannosidase II"/>
    <property type="match status" value="1"/>
</dbReference>
<dbReference type="InterPro" id="IPR013785">
    <property type="entry name" value="Aldolase_TIM"/>
</dbReference>
<dbReference type="InterPro" id="IPR002241">
    <property type="entry name" value="Glyco_hydro_27"/>
</dbReference>
<dbReference type="InterPro" id="IPR000111">
    <property type="entry name" value="Glyco_hydro_27/36_CS"/>
</dbReference>
<dbReference type="InterPro" id="IPR013780">
    <property type="entry name" value="Glyco_hydro_b"/>
</dbReference>
<dbReference type="InterPro" id="IPR006215">
    <property type="entry name" value="Glyco_hydro_melibiase"/>
</dbReference>
<dbReference type="InterPro" id="IPR017853">
    <property type="entry name" value="Glycoside_hydrolase_SF"/>
</dbReference>
<dbReference type="InterPro" id="IPR041233">
    <property type="entry name" value="Melibiase_C"/>
</dbReference>
<dbReference type="PANTHER" id="PTHR11452:SF75">
    <property type="entry name" value="ALPHA-GALACTOSIDASE MEL1"/>
    <property type="match status" value="1"/>
</dbReference>
<dbReference type="PANTHER" id="PTHR11452">
    <property type="entry name" value="ALPHA-GALACTOSIDASE/ALPHA-N-ACETYLGALACTOSAMINIDASE"/>
    <property type="match status" value="1"/>
</dbReference>
<dbReference type="Pfam" id="PF16499">
    <property type="entry name" value="Melibiase_2"/>
    <property type="match status" value="1"/>
</dbReference>
<dbReference type="Pfam" id="PF17801">
    <property type="entry name" value="Melibiase_C"/>
    <property type="match status" value="1"/>
</dbReference>
<dbReference type="PRINTS" id="PR00740">
    <property type="entry name" value="GLHYDRLASE27"/>
</dbReference>
<dbReference type="PRINTS" id="PR00748">
    <property type="entry name" value="MELIBIASE"/>
</dbReference>
<dbReference type="SUPFAM" id="SSF51445">
    <property type="entry name" value="(Trans)glycosidases"/>
    <property type="match status" value="1"/>
</dbReference>
<dbReference type="SUPFAM" id="SSF51011">
    <property type="entry name" value="Glycosyl hydrolase domain"/>
    <property type="match status" value="1"/>
</dbReference>
<dbReference type="PROSITE" id="PS00512">
    <property type="entry name" value="ALPHA_GALACTOSIDASE"/>
    <property type="match status" value="1"/>
</dbReference>
<name>MEL2_YEASX</name>
<protein>
    <recommendedName>
        <fullName>Alpha-galactosidase 2</fullName>
        <ecNumber>3.2.1.22</ecNumber>
    </recommendedName>
    <alternativeName>
        <fullName>Alpha-D-galactoside galactohydrolase 2</fullName>
    </alternativeName>
    <alternativeName>
        <fullName>Melibiase 2</fullName>
    </alternativeName>
</protein>
<organism>
    <name type="scientific">Saccharomyces cerevisiae</name>
    <name type="common">Baker's yeast</name>
    <dbReference type="NCBI Taxonomy" id="4932"/>
    <lineage>
        <taxon>Eukaryota</taxon>
        <taxon>Fungi</taxon>
        <taxon>Dikarya</taxon>
        <taxon>Ascomycota</taxon>
        <taxon>Saccharomycotina</taxon>
        <taxon>Saccharomycetes</taxon>
        <taxon>Saccharomycetales</taxon>
        <taxon>Saccharomycetaceae</taxon>
        <taxon>Saccharomyces</taxon>
    </lineage>
</organism>
<evidence type="ECO:0000250" key="1"/>
<evidence type="ECO:0000255" key="2"/>
<evidence type="ECO:0000305" key="3"/>
<reference key="1">
    <citation type="journal article" date="1994" name="Yeast">
        <title>Consideration of the evolution of the Saccharomyces cerevisiae MEL gene family on the basis of the nucleotide sequences of the genes and their flanking regions.</title>
        <authorList>
            <person name="Turakainen H."/>
            <person name="Kristo P."/>
            <person name="Korhola M."/>
        </authorList>
    </citation>
    <scope>NUCLEOTIDE SEQUENCE [GENOMIC DNA]</scope>
</reference>
<sequence>MFAFYFLTACISLKGVFGVSPSYNGLGLTPQMGWDNWNTFACDVSEQLLLDTADRISDLGLKDMGYKYIILDDCWSSGRDSDGFLVADEQKFPNGMGHVADHLHNNSFLFGMYSSAGEYTCAGYPGSLGREEEDAQFFANNRVDYLKYDNCYNKGQFGTPEISYHRYKAMSDALNKTGRPIFYSLCNWGQDLTFYWGSGIANSWRMSGDITAEFTRPDSRCPCDGDEYDCKYAGFHCSIMNILNKAAPMGQNAGVGGWNDLDNLEVRVGNLTDDEEKAHFPMWAMVKSPLIIGADVNTLKPSSYSIYSQASVIAINQDPKGIPATRVWRYYVSDTDEYGQGEIQMWSGPLDNGDQVVALLNGGSVPRPMNTTLEEIFFDSNLGSKELTSTWDIYDLWANRVDNSTASAILGQNKTATGILYNATEQSYKDGLSKNDTRLFGQKIGSLSPNAILNTTVPAHGIAFYRLRPSA</sequence>
<accession>P41945</accession>
<gene>
    <name type="primary">MEL2</name>
</gene>
<feature type="signal peptide" evidence="1">
    <location>
        <begin position="1"/>
        <end position="18"/>
    </location>
</feature>
<feature type="chain" id="PRO_0000001014" description="Alpha-galactosidase 2">
    <location>
        <begin position="19"/>
        <end position="471"/>
    </location>
</feature>
<feature type="active site" description="Nucleophile" evidence="1">
    <location>
        <position position="149"/>
    </location>
</feature>
<feature type="active site" description="Proton donor" evidence="1">
    <location>
        <position position="209"/>
    </location>
</feature>
<feature type="binding site" evidence="1">
    <location>
        <position position="72"/>
    </location>
    <ligand>
        <name>substrate</name>
    </ligand>
</feature>
<feature type="binding site" evidence="1">
    <location>
        <position position="73"/>
    </location>
    <ligand>
        <name>substrate</name>
    </ligand>
</feature>
<feature type="binding site" evidence="1">
    <location>
        <position position="147"/>
    </location>
    <ligand>
        <name>substrate</name>
    </ligand>
</feature>
<feature type="binding site" evidence="1">
    <location>
        <position position="205"/>
    </location>
    <ligand>
        <name>substrate</name>
    </ligand>
</feature>
<feature type="binding site" evidence="1">
    <location>
        <position position="251"/>
    </location>
    <ligand>
        <name>substrate</name>
    </ligand>
</feature>
<feature type="glycosylation site" description="N-linked (GlcNAc...) asparagine" evidence="2">
    <location>
        <position position="105"/>
    </location>
</feature>
<feature type="glycosylation site" description="N-linked (GlcNAc...) asparagine" evidence="2">
    <location>
        <position position="175"/>
    </location>
</feature>
<feature type="glycosylation site" description="N-linked (GlcNAc...) asparagine" evidence="2">
    <location>
        <position position="270"/>
    </location>
</feature>
<feature type="glycosylation site" description="N-linked (GlcNAc...) asparagine" evidence="2">
    <location>
        <position position="370"/>
    </location>
</feature>
<feature type="glycosylation site" description="N-linked (GlcNAc...) asparagine" evidence="2">
    <location>
        <position position="403"/>
    </location>
</feature>
<feature type="glycosylation site" description="N-linked (GlcNAc...) asparagine" evidence="2">
    <location>
        <position position="413"/>
    </location>
</feature>
<feature type="glycosylation site" description="N-linked (GlcNAc...) asparagine" evidence="2">
    <location>
        <position position="422"/>
    </location>
</feature>
<feature type="glycosylation site" description="N-linked (GlcNAc...) asparagine" evidence="2">
    <location>
        <position position="435"/>
    </location>
</feature>
<feature type="glycosylation site" description="N-linked (GlcNAc...) asparagine" evidence="2">
    <location>
        <position position="454"/>
    </location>
</feature>
<feature type="disulfide bond" evidence="1">
    <location>
        <begin position="42"/>
        <end position="74"/>
    </location>
</feature>
<feature type="disulfide bond" evidence="1">
    <location>
        <begin position="121"/>
        <end position="151"/>
    </location>
</feature>
<feature type="disulfide bond" evidence="1">
    <location>
        <begin position="221"/>
        <end position="237"/>
    </location>
</feature>
<feature type="disulfide bond" evidence="1">
    <location>
        <begin position="223"/>
        <end position="230"/>
    </location>
</feature>